<protein>
    <recommendedName>
        <fullName evidence="1">L-lactate dehydrogenase</fullName>
        <shortName evidence="1">L-LDH</shortName>
        <ecNumber evidence="1">1.1.1.27</ecNumber>
    </recommendedName>
</protein>
<proteinExistence type="inferred from homology"/>
<dbReference type="EC" id="1.1.1.27" evidence="1"/>
<dbReference type="EMBL" id="CP001015">
    <property type="protein sequence ID" value="ACF56088.1"/>
    <property type="molecule type" value="Genomic_DNA"/>
</dbReference>
<dbReference type="SMR" id="B5E4V6"/>
<dbReference type="KEGG" id="spx:SPG_1112"/>
<dbReference type="HOGENOM" id="CLU_045401_1_1_9"/>
<dbReference type="UniPathway" id="UPA00554">
    <property type="reaction ID" value="UER00611"/>
</dbReference>
<dbReference type="GO" id="GO:0005737">
    <property type="term" value="C:cytoplasm"/>
    <property type="evidence" value="ECO:0007669"/>
    <property type="project" value="UniProtKB-SubCell"/>
</dbReference>
<dbReference type="GO" id="GO:0004459">
    <property type="term" value="F:L-lactate dehydrogenase activity"/>
    <property type="evidence" value="ECO:0007669"/>
    <property type="project" value="UniProtKB-UniRule"/>
</dbReference>
<dbReference type="GO" id="GO:0006096">
    <property type="term" value="P:glycolytic process"/>
    <property type="evidence" value="ECO:0007669"/>
    <property type="project" value="UniProtKB-UniRule"/>
</dbReference>
<dbReference type="GO" id="GO:0006089">
    <property type="term" value="P:lactate metabolic process"/>
    <property type="evidence" value="ECO:0007669"/>
    <property type="project" value="TreeGrafter"/>
</dbReference>
<dbReference type="CDD" id="cd05291">
    <property type="entry name" value="HicDH_like"/>
    <property type="match status" value="1"/>
</dbReference>
<dbReference type="FunFam" id="3.40.50.720:FF:000018">
    <property type="entry name" value="Malate dehydrogenase"/>
    <property type="match status" value="1"/>
</dbReference>
<dbReference type="Gene3D" id="3.90.110.10">
    <property type="entry name" value="Lactate dehydrogenase/glycoside hydrolase, family 4, C-terminal"/>
    <property type="match status" value="1"/>
</dbReference>
<dbReference type="Gene3D" id="3.40.50.720">
    <property type="entry name" value="NAD(P)-binding Rossmann-like Domain"/>
    <property type="match status" value="1"/>
</dbReference>
<dbReference type="HAMAP" id="MF_00488">
    <property type="entry name" value="Lactate_dehydrog"/>
    <property type="match status" value="1"/>
</dbReference>
<dbReference type="InterPro" id="IPR001557">
    <property type="entry name" value="L-lactate/malate_DH"/>
</dbReference>
<dbReference type="InterPro" id="IPR011304">
    <property type="entry name" value="L-lactate_DH"/>
</dbReference>
<dbReference type="InterPro" id="IPR018177">
    <property type="entry name" value="L-lactate_DH_AS"/>
</dbReference>
<dbReference type="InterPro" id="IPR022383">
    <property type="entry name" value="Lactate/malate_DH_C"/>
</dbReference>
<dbReference type="InterPro" id="IPR001236">
    <property type="entry name" value="Lactate/malate_DH_N"/>
</dbReference>
<dbReference type="InterPro" id="IPR015955">
    <property type="entry name" value="Lactate_DH/Glyco_Ohase_4_C"/>
</dbReference>
<dbReference type="InterPro" id="IPR036291">
    <property type="entry name" value="NAD(P)-bd_dom_sf"/>
</dbReference>
<dbReference type="NCBIfam" id="TIGR01771">
    <property type="entry name" value="L-LDH-NAD"/>
    <property type="match status" value="1"/>
</dbReference>
<dbReference type="NCBIfam" id="NF000824">
    <property type="entry name" value="PRK00066.1"/>
    <property type="match status" value="1"/>
</dbReference>
<dbReference type="PANTHER" id="PTHR43128">
    <property type="entry name" value="L-2-HYDROXYCARBOXYLATE DEHYDROGENASE (NAD(P)(+))"/>
    <property type="match status" value="1"/>
</dbReference>
<dbReference type="PANTHER" id="PTHR43128:SF16">
    <property type="entry name" value="L-LACTATE DEHYDROGENASE"/>
    <property type="match status" value="1"/>
</dbReference>
<dbReference type="Pfam" id="PF02866">
    <property type="entry name" value="Ldh_1_C"/>
    <property type="match status" value="1"/>
</dbReference>
<dbReference type="Pfam" id="PF00056">
    <property type="entry name" value="Ldh_1_N"/>
    <property type="match status" value="1"/>
</dbReference>
<dbReference type="PIRSF" id="PIRSF000102">
    <property type="entry name" value="Lac_mal_DH"/>
    <property type="match status" value="1"/>
</dbReference>
<dbReference type="PRINTS" id="PR00086">
    <property type="entry name" value="LLDHDRGNASE"/>
</dbReference>
<dbReference type="SUPFAM" id="SSF56327">
    <property type="entry name" value="LDH C-terminal domain-like"/>
    <property type="match status" value="1"/>
</dbReference>
<dbReference type="SUPFAM" id="SSF51735">
    <property type="entry name" value="NAD(P)-binding Rossmann-fold domains"/>
    <property type="match status" value="1"/>
</dbReference>
<dbReference type="PROSITE" id="PS00064">
    <property type="entry name" value="L_LDH"/>
    <property type="match status" value="1"/>
</dbReference>
<feature type="chain" id="PRO_1000126159" description="L-lactate dehydrogenase">
    <location>
        <begin position="1"/>
        <end position="328"/>
    </location>
</feature>
<feature type="active site" description="Proton acceptor" evidence="1">
    <location>
        <position position="181"/>
    </location>
</feature>
<feature type="binding site" evidence="1">
    <location>
        <position position="18"/>
    </location>
    <ligand>
        <name>NAD(+)</name>
        <dbReference type="ChEBI" id="CHEBI:57540"/>
    </ligand>
</feature>
<feature type="binding site" evidence="1">
    <location>
        <position position="39"/>
    </location>
    <ligand>
        <name>NAD(+)</name>
        <dbReference type="ChEBI" id="CHEBI:57540"/>
    </ligand>
</feature>
<feature type="binding site" evidence="1">
    <location>
        <position position="46"/>
    </location>
    <ligand>
        <name>NAD(+)</name>
        <dbReference type="ChEBI" id="CHEBI:57540"/>
    </ligand>
</feature>
<feature type="binding site" evidence="1">
    <location>
        <position position="71"/>
    </location>
    <ligand>
        <name>NAD(+)</name>
        <dbReference type="ChEBI" id="CHEBI:57540"/>
    </ligand>
</feature>
<feature type="binding site" evidence="1">
    <location>
        <begin position="85"/>
        <end position="86"/>
    </location>
    <ligand>
        <name>NAD(+)</name>
        <dbReference type="ChEBI" id="CHEBI:57540"/>
    </ligand>
</feature>
<feature type="binding site" evidence="1">
    <location>
        <position position="88"/>
    </location>
    <ligand>
        <name>substrate</name>
    </ligand>
</feature>
<feature type="binding site" evidence="1">
    <location>
        <position position="94"/>
    </location>
    <ligand>
        <name>substrate</name>
    </ligand>
</feature>
<feature type="binding site" evidence="1">
    <location>
        <position position="107"/>
    </location>
    <ligand>
        <name>NAD(+)</name>
        <dbReference type="ChEBI" id="CHEBI:57540"/>
    </ligand>
</feature>
<feature type="binding site" evidence="1">
    <location>
        <begin position="124"/>
        <end position="126"/>
    </location>
    <ligand>
        <name>NAD(+)</name>
        <dbReference type="ChEBI" id="CHEBI:57540"/>
    </ligand>
</feature>
<feature type="binding site" evidence="1">
    <location>
        <begin position="126"/>
        <end position="129"/>
    </location>
    <ligand>
        <name>substrate</name>
    </ligand>
</feature>
<feature type="binding site" evidence="1">
    <location>
        <position position="149"/>
    </location>
    <ligand>
        <name>NAD(+)</name>
        <dbReference type="ChEBI" id="CHEBI:57540"/>
    </ligand>
</feature>
<feature type="binding site" evidence="1">
    <location>
        <begin position="154"/>
        <end position="157"/>
    </location>
    <ligand>
        <name>substrate</name>
    </ligand>
</feature>
<feature type="binding site" evidence="1">
    <location>
        <position position="159"/>
    </location>
    <ligand>
        <name>beta-D-fructose 1,6-bisphosphate</name>
        <dbReference type="ChEBI" id="CHEBI:32966"/>
        <note>allosteric activator</note>
    </ligand>
</feature>
<feature type="binding site" evidence="1">
    <location>
        <position position="174"/>
    </location>
    <ligand>
        <name>beta-D-fructose 1,6-bisphosphate</name>
        <dbReference type="ChEBI" id="CHEBI:32966"/>
        <note>allosteric activator</note>
    </ligand>
</feature>
<feature type="binding site" evidence="1">
    <location>
        <position position="235"/>
    </location>
    <ligand>
        <name>substrate</name>
    </ligand>
</feature>
<feature type="modified residue" description="Phosphotyrosine" evidence="1">
    <location>
        <position position="226"/>
    </location>
</feature>
<reference key="1">
    <citation type="journal article" date="2001" name="Microb. Drug Resist.">
        <title>Annotated draft genomic sequence from a Streptococcus pneumoniae type 19F clinical isolate.</title>
        <authorList>
            <person name="Dopazo J."/>
            <person name="Mendoza A."/>
            <person name="Herrero J."/>
            <person name="Caldara F."/>
            <person name="Humbert Y."/>
            <person name="Friedli L."/>
            <person name="Guerrier M."/>
            <person name="Grand-Schenk E."/>
            <person name="Gandin C."/>
            <person name="de Francesco M."/>
            <person name="Polissi A."/>
            <person name="Buell G."/>
            <person name="Feger G."/>
            <person name="Garcia E."/>
            <person name="Peitsch M."/>
            <person name="Garcia-Bustos J.F."/>
        </authorList>
    </citation>
    <scope>NUCLEOTIDE SEQUENCE [LARGE SCALE GENOMIC DNA]</scope>
    <source>
        <strain>G54</strain>
    </source>
</reference>
<reference key="2">
    <citation type="submission" date="2008-03" db="EMBL/GenBank/DDBJ databases">
        <title>Pneumococcal beta glucoside metabolism investigated by whole genome comparison.</title>
        <authorList>
            <person name="Mulas L."/>
            <person name="Trappetti C."/>
            <person name="Hakenbeck R."/>
            <person name="Iannelli F."/>
            <person name="Pozzi G."/>
            <person name="Davidsen T.M."/>
            <person name="Tettelin H."/>
            <person name="Oggioni M."/>
        </authorList>
    </citation>
    <scope>NUCLEOTIDE SEQUENCE [LARGE SCALE GENOMIC DNA]</scope>
    <source>
        <strain>G54</strain>
    </source>
</reference>
<accession>B5E4V6</accession>
<gene>
    <name evidence="1" type="primary">ldh</name>
    <name type="ordered locus">SPG_1112</name>
</gene>
<keyword id="KW-0021">Allosteric enzyme</keyword>
<keyword id="KW-0963">Cytoplasm</keyword>
<keyword id="KW-0520">NAD</keyword>
<keyword id="KW-0560">Oxidoreductase</keyword>
<keyword id="KW-0597">Phosphoprotein</keyword>
<sequence>MTSTKQHKKVILVGDGAVGSSYAFALVNQGIAQELGIIEIPQLHEKAVGDALDLSHALAFTSPKKIYAAQYSDCADADLVVITAGAPQKPGETRLDLVGKNLAINKSIVTQVVESGFKGIFLVAANPVDVLTYSTWKFSGFPKERVIGSGTSLDSARFRQALAEKLDVDARSVHAYIMGEHGDSEFAVWSHANIAGVNLEEFLKDTQNVQEAELIELFEGVRDAAYTIINKKGATYYGIAVALARITKAILDDENAVLPLSVFQEGQYGVENVFIGQPAVVGAHGIVRPVNIPLNDAETQKMQASAKELQAIIDEAWKNPEFQEASKN</sequence>
<comment type="function">
    <text evidence="1">Catalyzes the conversion of lactate to pyruvate.</text>
</comment>
<comment type="catalytic activity">
    <reaction evidence="1">
        <text>(S)-lactate + NAD(+) = pyruvate + NADH + H(+)</text>
        <dbReference type="Rhea" id="RHEA:23444"/>
        <dbReference type="ChEBI" id="CHEBI:15361"/>
        <dbReference type="ChEBI" id="CHEBI:15378"/>
        <dbReference type="ChEBI" id="CHEBI:16651"/>
        <dbReference type="ChEBI" id="CHEBI:57540"/>
        <dbReference type="ChEBI" id="CHEBI:57945"/>
        <dbReference type="EC" id="1.1.1.27"/>
    </reaction>
</comment>
<comment type="activity regulation">
    <text evidence="1">Allosterically activated by fructose 1,6-bisphosphate (FBP).</text>
</comment>
<comment type="pathway">
    <text evidence="1">Fermentation; pyruvate fermentation to lactate; (S)-lactate from pyruvate: step 1/1.</text>
</comment>
<comment type="subunit">
    <text evidence="1">Homotetramer.</text>
</comment>
<comment type="subcellular location">
    <subcellularLocation>
        <location evidence="1">Cytoplasm</location>
    </subcellularLocation>
</comment>
<comment type="similarity">
    <text evidence="1">Belongs to the LDH/MDH superfamily. LDH family.</text>
</comment>
<evidence type="ECO:0000255" key="1">
    <source>
        <dbReference type="HAMAP-Rule" id="MF_00488"/>
    </source>
</evidence>
<name>LDH_STRP4</name>
<organism>
    <name type="scientific">Streptococcus pneumoniae serotype 19F (strain G54)</name>
    <dbReference type="NCBI Taxonomy" id="512566"/>
    <lineage>
        <taxon>Bacteria</taxon>
        <taxon>Bacillati</taxon>
        <taxon>Bacillota</taxon>
        <taxon>Bacilli</taxon>
        <taxon>Lactobacillales</taxon>
        <taxon>Streptococcaceae</taxon>
        <taxon>Streptococcus</taxon>
    </lineage>
</organism>